<name>U507_DEBHA</name>
<reference key="1">
    <citation type="journal article" date="2004" name="Nature">
        <title>Genome evolution in yeasts.</title>
        <authorList>
            <person name="Dujon B."/>
            <person name="Sherman D."/>
            <person name="Fischer G."/>
            <person name="Durrens P."/>
            <person name="Casaregola S."/>
            <person name="Lafontaine I."/>
            <person name="de Montigny J."/>
            <person name="Marck C."/>
            <person name="Neuveglise C."/>
            <person name="Talla E."/>
            <person name="Goffard N."/>
            <person name="Frangeul L."/>
            <person name="Aigle M."/>
            <person name="Anthouard V."/>
            <person name="Babour A."/>
            <person name="Barbe V."/>
            <person name="Barnay S."/>
            <person name="Blanchin S."/>
            <person name="Beckerich J.-M."/>
            <person name="Beyne E."/>
            <person name="Bleykasten C."/>
            <person name="Boisrame A."/>
            <person name="Boyer J."/>
            <person name="Cattolico L."/>
            <person name="Confanioleri F."/>
            <person name="de Daruvar A."/>
            <person name="Despons L."/>
            <person name="Fabre E."/>
            <person name="Fairhead C."/>
            <person name="Ferry-Dumazet H."/>
            <person name="Groppi A."/>
            <person name="Hantraye F."/>
            <person name="Hennequin C."/>
            <person name="Jauniaux N."/>
            <person name="Joyet P."/>
            <person name="Kachouri R."/>
            <person name="Kerrest A."/>
            <person name="Koszul R."/>
            <person name="Lemaire M."/>
            <person name="Lesur I."/>
            <person name="Ma L."/>
            <person name="Muller H."/>
            <person name="Nicaud J.-M."/>
            <person name="Nikolski M."/>
            <person name="Oztas S."/>
            <person name="Ozier-Kalogeropoulos O."/>
            <person name="Pellenz S."/>
            <person name="Potier S."/>
            <person name="Richard G.-F."/>
            <person name="Straub M.-L."/>
            <person name="Suleau A."/>
            <person name="Swennen D."/>
            <person name="Tekaia F."/>
            <person name="Wesolowski-Louvel M."/>
            <person name="Westhof E."/>
            <person name="Wirth B."/>
            <person name="Zeniou-Meyer M."/>
            <person name="Zivanovic Y."/>
            <person name="Bolotin-Fukuhara M."/>
            <person name="Thierry A."/>
            <person name="Bouchier C."/>
            <person name="Caudron B."/>
            <person name="Scarpelli C."/>
            <person name="Gaillardin C."/>
            <person name="Weissenbach J."/>
            <person name="Wincker P."/>
            <person name="Souciet J.-L."/>
        </authorList>
    </citation>
    <scope>NUCLEOTIDE SEQUENCE [LARGE SCALE GENOMIC DNA]</scope>
    <source>
        <strain>ATCC 36239 / CBS 767 / BCRC 21394 / JCM 1990 / NBRC 0083 / IGC 2968</strain>
    </source>
</reference>
<protein>
    <recommendedName>
        <fullName>UPF0507 protein DEHA2G04334g</fullName>
    </recommendedName>
</protein>
<accession>Q6BJ87</accession>
<feature type="chain" id="PRO_0000311652" description="UPF0507 protein DEHA2G04334g">
    <location>
        <begin position="1"/>
        <end position="1235"/>
    </location>
</feature>
<feature type="domain" description="VPS9" evidence="1">
    <location>
        <begin position="323"/>
        <end position="487"/>
    </location>
</feature>
<feature type="region of interest" description="Disordered" evidence="2">
    <location>
        <begin position="1097"/>
        <end position="1124"/>
    </location>
</feature>
<feature type="compositionally biased region" description="Low complexity" evidence="2">
    <location>
        <begin position="1100"/>
        <end position="1115"/>
    </location>
</feature>
<organism>
    <name type="scientific">Debaryomyces hansenii (strain ATCC 36239 / CBS 767 / BCRC 21394 / JCM 1990 / NBRC 0083 / IGC 2968)</name>
    <name type="common">Yeast</name>
    <name type="synonym">Torulaspora hansenii</name>
    <dbReference type="NCBI Taxonomy" id="284592"/>
    <lineage>
        <taxon>Eukaryota</taxon>
        <taxon>Fungi</taxon>
        <taxon>Dikarya</taxon>
        <taxon>Ascomycota</taxon>
        <taxon>Saccharomycotina</taxon>
        <taxon>Pichiomycetes</taxon>
        <taxon>Debaryomycetaceae</taxon>
        <taxon>Debaryomyces</taxon>
    </lineage>
</organism>
<evidence type="ECO:0000255" key="1">
    <source>
        <dbReference type="PROSITE-ProRule" id="PRU00550"/>
    </source>
</evidence>
<evidence type="ECO:0000256" key="2">
    <source>
        <dbReference type="SAM" id="MobiDB-lite"/>
    </source>
</evidence>
<evidence type="ECO:0000305" key="3"/>
<comment type="similarity">
    <text evidence="3">Belongs to the UPF0507 family.</text>
</comment>
<proteinExistence type="inferred from homology"/>
<dbReference type="EMBL" id="CR382139">
    <property type="protein sequence ID" value="CAG90189.2"/>
    <property type="molecule type" value="Genomic_DNA"/>
</dbReference>
<dbReference type="RefSeq" id="XP_461734.2">
    <property type="nucleotide sequence ID" value="XM_461734.1"/>
</dbReference>
<dbReference type="SMR" id="Q6BJ87"/>
<dbReference type="FunCoup" id="Q6BJ87">
    <property type="interactions" value="22"/>
</dbReference>
<dbReference type="STRING" id="284592.Q6BJ87"/>
<dbReference type="GeneID" id="2904609"/>
<dbReference type="KEGG" id="dha:DEHA2G04334g"/>
<dbReference type="VEuPathDB" id="FungiDB:DEHA2G04334g"/>
<dbReference type="eggNOG" id="ENOG502R3ZQ">
    <property type="taxonomic scope" value="Eukaryota"/>
</dbReference>
<dbReference type="HOGENOM" id="CLU_008912_0_0_1"/>
<dbReference type="InParanoid" id="Q6BJ87"/>
<dbReference type="OMA" id="LNCIFNN"/>
<dbReference type="OrthoDB" id="7464126at2759"/>
<dbReference type="Proteomes" id="UP000000599">
    <property type="component" value="Chromosome G"/>
</dbReference>
<dbReference type="GO" id="GO:0005769">
    <property type="term" value="C:early endosome"/>
    <property type="evidence" value="ECO:0007669"/>
    <property type="project" value="TreeGrafter"/>
</dbReference>
<dbReference type="GO" id="GO:0005770">
    <property type="term" value="C:late endosome"/>
    <property type="evidence" value="ECO:0007669"/>
    <property type="project" value="TreeGrafter"/>
</dbReference>
<dbReference type="GO" id="GO:0005886">
    <property type="term" value="C:plasma membrane"/>
    <property type="evidence" value="ECO:0007669"/>
    <property type="project" value="TreeGrafter"/>
</dbReference>
<dbReference type="GO" id="GO:0030133">
    <property type="term" value="C:transport vesicle"/>
    <property type="evidence" value="ECO:0007669"/>
    <property type="project" value="TreeGrafter"/>
</dbReference>
<dbReference type="GO" id="GO:0097422">
    <property type="term" value="C:tubular endosome"/>
    <property type="evidence" value="ECO:0007669"/>
    <property type="project" value="TreeGrafter"/>
</dbReference>
<dbReference type="GO" id="GO:0005085">
    <property type="term" value="F:guanyl-nucleotide exchange factor activity"/>
    <property type="evidence" value="ECO:0007669"/>
    <property type="project" value="TreeGrafter"/>
</dbReference>
<dbReference type="GO" id="GO:0000149">
    <property type="term" value="F:SNARE binding"/>
    <property type="evidence" value="ECO:0007669"/>
    <property type="project" value="TreeGrafter"/>
</dbReference>
<dbReference type="GO" id="GO:0045022">
    <property type="term" value="P:early endosome to late endosome transport"/>
    <property type="evidence" value="ECO:0007669"/>
    <property type="project" value="TreeGrafter"/>
</dbReference>
<dbReference type="Gene3D" id="1.25.40.20">
    <property type="entry name" value="Ankyrin repeat-containing domain"/>
    <property type="match status" value="1"/>
</dbReference>
<dbReference type="Gene3D" id="1.20.1050.80">
    <property type="entry name" value="VPS9 domain"/>
    <property type="match status" value="1"/>
</dbReference>
<dbReference type="InterPro" id="IPR002110">
    <property type="entry name" value="Ankyrin_rpt"/>
</dbReference>
<dbReference type="InterPro" id="IPR036770">
    <property type="entry name" value="Ankyrin_rpt-contain_sf"/>
</dbReference>
<dbReference type="InterPro" id="IPR051248">
    <property type="entry name" value="UPF0507/Ank_repeat_27"/>
</dbReference>
<dbReference type="InterPro" id="IPR003123">
    <property type="entry name" value="VPS9"/>
</dbReference>
<dbReference type="InterPro" id="IPR037191">
    <property type="entry name" value="VPS9_dom_sf"/>
</dbReference>
<dbReference type="PANTHER" id="PTHR24170">
    <property type="entry name" value="ANKYRIN REPEAT DOMAIN-CONTAINING PROTEIN 27"/>
    <property type="match status" value="1"/>
</dbReference>
<dbReference type="PANTHER" id="PTHR24170:SF1">
    <property type="entry name" value="DOMAIN PROTEIN, PUTATIVE (AFU_ORTHOLOGUE AFUA_1G09870)-RELATED"/>
    <property type="match status" value="1"/>
</dbReference>
<dbReference type="Pfam" id="PF02204">
    <property type="entry name" value="VPS9"/>
    <property type="match status" value="1"/>
</dbReference>
<dbReference type="SMART" id="SM00248">
    <property type="entry name" value="ANK"/>
    <property type="match status" value="2"/>
</dbReference>
<dbReference type="SUPFAM" id="SSF48403">
    <property type="entry name" value="Ankyrin repeat"/>
    <property type="match status" value="1"/>
</dbReference>
<dbReference type="SUPFAM" id="SSF109993">
    <property type="entry name" value="VPS9 domain"/>
    <property type="match status" value="1"/>
</dbReference>
<dbReference type="PROSITE" id="PS51205">
    <property type="entry name" value="VPS9"/>
    <property type="match status" value="1"/>
</dbReference>
<gene>
    <name type="ordered locus">DEHA2G04334g</name>
</gene>
<sequence>MPPQSKSITYLPLLYNPFLNCIFNNPHHSKNPFRQTVQELSENHNDYTILVPPAHILHELFDPSTEKSSTKIRLHDLCYHNEDFIRSHIIKTNTTYPSITSSKSSSAIYVTMNGKQILIKNGIVFTGKGFKKSLRLKVLDINYFNSFCDYFPKGSKFMILYIEDSMFGSFDPNVPVSMQSREMDEIKIEPTLKKDQQFHDITFEKLLRSFPLLSNAVSDKFYKLFHHNNYQFRLLRTNTRKKLSSIKFEFQSMLDEAFKVVSDSVKIDTPDSEQTYHLINYILRLYPGLDLNRLVHEYVELNLYDKLWAQLIFQFDFPDNDKQNDDSDAIKILTKEKYDHLACISLNQLDVPTDKPWHINELHKRIYKAIDEFSKLSDASILNSSGKTQILKNTVNILTNNVKQISEIESMTEKTGSDGITVNADILIGLLIMVIVHARVDNLEAHLYYIKHFNSVDYTNDGYFCYILSNFDAVIYHLSSSMNDEPQYAGLVKSSALNHKFWSLIDSGDTDNLLVLLDEVQQGLGDSKLPNNHFLNSRTVQGESCLMMAVKADNSDAFNYIINYNYQWFSIDDILFDKNTTTNQSLLTVALTQESYNIITQLVEIILSNTTLEEQILYFNSVDNSGRSAGHYFHHSPNLIDQIGFLIDWELKDLNSHTPLFSLCRCYDHPDYATLLEKGFDCIYKKYGKESIDFDKHIDKMGNTLLHIILKDLSKTKLLTSETNLINVNQLNYKNLTPLDLYVKYNRLENLKELLKDDRLDFKFEDSTNFYSVFDFLGSSTAKSPTNTVLKEIEKLIYNYCFINYYPNTDTEKIAALNARFDTTKKDWALFFIKSNKIPTLNAETLDRLRKFTYIFKLDHTHSFFPDNETFWLNFPQEKSMVPIFAKFRINRIIEHVNMYMISLNFHPILTNEKIFENFFVKNRNKSTLELINDITNRQESDKRKFSNLVLGIAQVNEIDFFLRFSLTDLVNFQTTIAKFNKLVAISDIKQSDLRIVTDRMFNCLFSSNILPSVLLREYNFALTNQYKNQDSSYKELLTFTAWLELSTIELTKNIRRILLKLDDWKELHKNIKELNIELTKYEEDAPTRYATVVRDSTTEADTTDTTDATDATHASPNLANSTNGNLQQAHQLEAEAEEIADTSSSFFSFASIIENKKARYKKLLLMKAEEIKKIMKLNAELKFDHECIAAEISNFLKFKSNFINLGIKRYVRLSLCLSKIRKYELTKLLNSCKR</sequence>
<keyword id="KW-1185">Reference proteome</keyword>